<sequence>MMSLRLFSILLAAVVSGAQGWGYYGCNEELVGPLYARSLGASSYYGLFTTARFARLHGISGWSPRIGDPNPWLQIDLMKKHRIRAVATQGAFNSWDWVTRYMLLYGDRVDSWTPFYQQGHNATFFGNVNDSAVVRHDLHYHFTARYIRIVPLAWNPRGKIGLRLGIYGCPYTSNILYFDGDDAISYRFQRGASQSLWDVFAFSFKTEEKDGLLLHTEGSQGDYVTLELQGAHLLLHMSLGSSPIQPRPGHTTVSAGGVLNDLSWHYVRVDRYGREANLTLDGYVHRFVLNGDFERLNLENEIFIGGLVGAARKNLAYRHNFRGCIENVIYNRINIAEMAVQRHSRITFEGNVAFRCLDPVPHPINFGGPHNFVQVPGFPRRGRLAVSFRFRTWDLTGLLLFSRLGDGLGHVELMLSEGQVNVSIAQTGRKKLQFAAGYRLNDGFWHEVNFVAQENHAVISIDDVEGAEVRVSYPLLIRTGTSYFFGGCPKPASRWGCHSNQTAFHGCMELLKVDGQLVNLTLVEFRKLGYFAEVLFDTCGITDRCSPNMCEHDGRCYQSWDDFICYCELTGYKGVTCHEPLYKESCEAYRLSGKYSGNYTIDPDGSGPLKPFVVYCDIRENRAWTVVRHDRLWTTRVTGSSMDRPFLGAIQYWNASWEEVSALANASQHCEQWIEFSCYNSRLLNTAGGYPYSFWIGRNEEQHFYWGGSQPGIQRCACGLDQSCIDPALHCNCDADQPQWRTDKGLLTFVDHLPVTQVVIGDTNRSSSEAQFFLRPLRCYGDRNSWNTISFRTGAALRFPPIRANHSLDVSFYFRTSAPSGVFLENMGGPFCQWRRPYVRVELNTSRDVVFAFDIGNGDENLTVHSDDFEFNDDEWHLVRAEINVKQARLRVDHRPWVLRPMPLQTYIWLEYDQPLYVGSAELKRRPFVGCLRAMRLNGVTLNLEGRANASEGTFPNCTGHCTHPRFPCFHGGRCVERYSYYTCDCDLTAFDGPYCNHDIGGFFETGTWMRYNLQSALRSAAQEFSHMLSRPVPGYEPGYIPGYDTPGYVPGYHGPGYRLPDYPRPGRPVPGYRGPVYNVTGEEVSFSFSTSSAPAVLLYVSSFVRDYMAVLIKEDGTLQLRYQLGTSPYVYQLTTRPVTDGQPHSVNITRVYRNLFIQVDYFPLTEQKFSLLVDSQLDSPKALYLGRVMETGVIDPEIQRYNTPGFSGCLSGVRFNNVAPLKTHFRTPRPMTAELAEAMRVQGELSESNCGAMPRLVSEVPPELDPWYLPPDFPYYHDDGWIAILLGFLVAFLLLGLVGMLVLFYLQNHRYKGSYHTNEPKATHDSHPGGKAPLPPSGPAQAPAPTPAPTQVPTPAPAPASGPGPRDQNLPQILEESRSE</sequence>
<organism>
    <name type="scientific">Rattus norvegicus</name>
    <name type="common">Rat</name>
    <dbReference type="NCBI Taxonomy" id="10116"/>
    <lineage>
        <taxon>Eukaryota</taxon>
        <taxon>Metazoa</taxon>
        <taxon>Chordata</taxon>
        <taxon>Craniata</taxon>
        <taxon>Vertebrata</taxon>
        <taxon>Euteleostomi</taxon>
        <taxon>Mammalia</taxon>
        <taxon>Eutheria</taxon>
        <taxon>Euarchontoglires</taxon>
        <taxon>Glires</taxon>
        <taxon>Rodentia</taxon>
        <taxon>Myomorpha</taxon>
        <taxon>Muroidea</taxon>
        <taxon>Muridae</taxon>
        <taxon>Murinae</taxon>
        <taxon>Rattus</taxon>
    </lineage>
</organism>
<reference key="1">
    <citation type="journal article" date="1997" name="EMBO J.">
        <title>Identification of a novel contactin-associated transmembrane receptor with multiple domains implicated in protein-protein interactions.</title>
        <authorList>
            <person name="Peles E."/>
            <person name="Nativ M."/>
            <person name="Lustig M."/>
            <person name="Grumet M."/>
            <person name="Schilling J."/>
            <person name="Martinez R."/>
            <person name="Plowman G.D."/>
            <person name="Schlessinger J."/>
        </authorList>
    </citation>
    <scope>NUCLEOTIDE SEQUENCE [MRNA]</scope>
    <scope>INTERACTION WITH CONTACTIN</scope>
    <source>
        <tissue>Pituitary tumor</tissue>
    </source>
</reference>
<reference key="2">
    <citation type="journal article" date="1997" name="Neuron">
        <title>Paranodin, a glycoprotein of neuronal paranodal membranes.</title>
        <authorList>
            <person name="Menegoz M."/>
            <person name="Gaspar P."/>
            <person name="Le Bert M."/>
            <person name="Galvez T."/>
            <person name="Burgaya F."/>
            <person name="Palfrey C."/>
            <person name="Ezan P."/>
            <person name="Arnos F."/>
            <person name="Girault J.-A."/>
        </authorList>
    </citation>
    <scope>NUCLEOTIDE SEQUENCE [MRNA]</scope>
    <source>
        <strain>Sprague-Dawley</strain>
        <tissue>Brain</tissue>
    </source>
</reference>
<reference key="3">
    <citation type="journal article" date="1997" name="J. Cell Biol.">
        <title>The axonal membrane protein Caspr, a homologue of neurexin IV, is a component of the septate-like paranodal junctions that assemble during myelination.</title>
        <authorList>
            <person name="Einheber S."/>
            <person name="Zanazzi G."/>
            <person name="Ching W."/>
            <person name="Scherer S."/>
            <person name="Milner T.A."/>
            <person name="Peles E."/>
            <person name="Salzer J.L."/>
        </authorList>
    </citation>
    <scope>CHARACTERIZATION</scope>
    <scope>TISSUE SPECIFICITY</scope>
    <scope>SUBCELLULAR LOCATION</scope>
    <scope>DEVELOPMENTAL STAGE</scope>
</reference>
<reference key="4">
    <citation type="journal article" date="2001" name="Cell Tissue Res.">
        <title>Internodal specializations of myelinated axons in the central nervous system.</title>
        <authorList>
            <person name="Arroyo E.J."/>
            <person name="Xu T."/>
            <person name="Poliak S."/>
            <person name="Watson M."/>
            <person name="Peles E."/>
            <person name="Scherer S.S."/>
        </authorList>
    </citation>
    <scope>TISSUE SPECIFICITY</scope>
</reference>
<reference key="5">
    <citation type="journal article" date="2012" name="Nat. Commun.">
        <title>Quantitative maps of protein phosphorylation sites across 14 different rat organs and tissues.</title>
        <authorList>
            <person name="Lundby A."/>
            <person name="Secher A."/>
            <person name="Lage K."/>
            <person name="Nordsborg N.B."/>
            <person name="Dmytriyev A."/>
            <person name="Lundby C."/>
            <person name="Olsen J.V."/>
        </authorList>
    </citation>
    <scope>IDENTIFICATION BY MASS SPECTROMETRY [LARGE SCALE ANALYSIS]</scope>
</reference>
<reference key="6">
    <citation type="journal article" date="2013" name="J. Proteome Res.">
        <title>Site-specific glycan-peptide analysis for determination of N-glycoproteome heterogeneity.</title>
        <authorList>
            <person name="Parker B.L."/>
            <person name="Thaysen-Andersen M."/>
            <person name="Solis N."/>
            <person name="Scott N.E."/>
            <person name="Larsen M.R."/>
            <person name="Graham M.E."/>
            <person name="Packer N.H."/>
            <person name="Cordwell S.J."/>
        </authorList>
    </citation>
    <scope>GLYCOSYLATION [LARGE SCALE ANALYSIS] AT ASN-277; ASN-500 AND ASN-598</scope>
    <scope>IDENTIFICATION BY MASS SPECTROMETRY [LARGE SCALE ANALYSIS]</scope>
    <source>
        <tissue>Brain</tissue>
    </source>
</reference>
<accession>P97846</accession>
<name>CNTP1_RAT</name>
<evidence type="ECO:0000250" key="1"/>
<evidence type="ECO:0000250" key="2">
    <source>
        <dbReference type="UniProtKB" id="O54991"/>
    </source>
</evidence>
<evidence type="ECO:0000255" key="3"/>
<evidence type="ECO:0000255" key="4">
    <source>
        <dbReference type="PROSITE-ProRule" id="PRU00076"/>
    </source>
</evidence>
<evidence type="ECO:0000255" key="5">
    <source>
        <dbReference type="PROSITE-ProRule" id="PRU00081"/>
    </source>
</evidence>
<evidence type="ECO:0000255" key="6">
    <source>
        <dbReference type="PROSITE-ProRule" id="PRU00122"/>
    </source>
</evidence>
<evidence type="ECO:0000255" key="7">
    <source>
        <dbReference type="PROSITE-ProRule" id="PRU00739"/>
    </source>
</evidence>
<evidence type="ECO:0000256" key="8">
    <source>
        <dbReference type="SAM" id="MobiDB-lite"/>
    </source>
</evidence>
<evidence type="ECO:0000269" key="9">
    <source>
    </source>
</evidence>
<evidence type="ECO:0000269" key="10">
    <source>
    </source>
</evidence>
<evidence type="ECO:0000269" key="11">
    <source>
    </source>
</evidence>
<evidence type="ECO:0000305" key="12"/>
<evidence type="ECO:0007744" key="13">
    <source>
    </source>
</evidence>
<gene>
    <name type="primary">Cntnap1</name>
    <name type="synonym">Caspr</name>
    <name type="synonym">Nrxn4</name>
</gene>
<keyword id="KW-0130">Cell adhesion</keyword>
<keyword id="KW-0965">Cell junction</keyword>
<keyword id="KW-1015">Disulfide bond</keyword>
<keyword id="KW-0245">EGF-like domain</keyword>
<keyword id="KW-0325">Glycoprotein</keyword>
<keyword id="KW-0472">Membrane</keyword>
<keyword id="KW-0597">Phosphoprotein</keyword>
<keyword id="KW-1185">Reference proteome</keyword>
<keyword id="KW-0677">Repeat</keyword>
<keyword id="KW-0729">SH3-binding</keyword>
<keyword id="KW-0732">Signal</keyword>
<keyword id="KW-0812">Transmembrane</keyword>
<keyword id="KW-1133">Transmembrane helix</keyword>
<proteinExistence type="evidence at protein level"/>
<comment type="function">
    <text evidence="2">Required, with CNTNAP2, for radial and longitudinal organization of myelinated axons. Plays a role in the formation of functional distinct domains critical for saltatory conduction of nerve impulses in myelinated nerve fibers. Demarcates the paranodal region of the axo-glial junction. In association with contactin involved in the signaling between axons and myelinating glial cells.</text>
</comment>
<comment type="subunit">
    <text evidence="10">Interacts with CNTN1/contactin in cis form.</text>
</comment>
<comment type="subcellular location">
    <subcellularLocation>
        <location evidence="12">Membrane</location>
        <topology evidence="12">Single-pass type I membrane protein</topology>
    </subcellularLocation>
    <subcellularLocation>
        <location evidence="11">Cell junction</location>
        <location evidence="11">Paranodal septate junction</location>
    </subcellularLocation>
</comment>
<comment type="tissue specificity">
    <text evidence="9 11">Predominantly expressed in brain. In myelinated nerve fibers of the CNS predominantly found in paranodal axoglial junctions. In unmyelinated nerve fibers of the CNS diffusely distributed along the entire surface. Weak expression is detected in ovary, pancreas, colon, lung, heart, intestine and testis.</text>
</comment>
<comment type="developmental stage">
    <text evidence="11">Detected on postnatal day 7 in cerebellum. Follows a caudorostral progression according to the myelination process. Appears to redistribute from the internode to the paranodal region during myelin compaction and maturation (PubMed:9396755). Expression reaches maximal levels between days 14 and 18 and remains at the same levels until adulthood.</text>
</comment>
<comment type="similarity">
    <text evidence="12">Belongs to the neurexin family.</text>
</comment>
<protein>
    <recommendedName>
        <fullName>Contactin-associated protein 1</fullName>
        <shortName>Caspr</shortName>
        <shortName>Caspr1</shortName>
    </recommendedName>
    <alternativeName>
        <fullName>Neurexin IV</fullName>
    </alternativeName>
    <alternativeName>
        <fullName>Neurexin-4</fullName>
    </alternativeName>
    <alternativeName>
        <fullName>Paranodin</fullName>
    </alternativeName>
    <alternativeName>
        <fullName>p190</fullName>
    </alternativeName>
</protein>
<dbReference type="EMBL" id="U87224">
    <property type="protein sequence ID" value="AAB48482.1"/>
    <property type="molecule type" value="mRNA"/>
</dbReference>
<dbReference type="EMBL" id="AF000114">
    <property type="protein sequence ID" value="AAC53342.1"/>
    <property type="molecule type" value="mRNA"/>
</dbReference>
<dbReference type="PIR" id="T31083">
    <property type="entry name" value="T31083"/>
</dbReference>
<dbReference type="RefSeq" id="NP_114450.1">
    <property type="nucleotide sequence ID" value="NM_032061.2"/>
</dbReference>
<dbReference type="SMR" id="P97846"/>
<dbReference type="BioGRID" id="249874">
    <property type="interactions" value="4"/>
</dbReference>
<dbReference type="FunCoup" id="P97846">
    <property type="interactions" value="1979"/>
</dbReference>
<dbReference type="IntAct" id="P97846">
    <property type="interactions" value="1"/>
</dbReference>
<dbReference type="MINT" id="P97846"/>
<dbReference type="STRING" id="10116.ENSRNOP00000027505"/>
<dbReference type="GlyCosmos" id="P97846">
    <property type="glycosylation" value="17 sites, 4 glycans"/>
</dbReference>
<dbReference type="GlyGen" id="P97846">
    <property type="glycosylation" value="18 sites, 3 N-linked glycans (4 sites)"/>
</dbReference>
<dbReference type="iPTMnet" id="P97846"/>
<dbReference type="PhosphoSitePlus" id="P97846"/>
<dbReference type="jPOST" id="P97846"/>
<dbReference type="PaxDb" id="10116-ENSRNOP00000027505"/>
<dbReference type="ABCD" id="P97846">
    <property type="antibodies" value="1 sequenced antibody"/>
</dbReference>
<dbReference type="Ensembl" id="ENSRNOT00000027505.7">
    <property type="protein sequence ID" value="ENSRNOP00000027505.6"/>
    <property type="gene ID" value="ENSRNOG00000020277.7"/>
</dbReference>
<dbReference type="GeneID" id="84008"/>
<dbReference type="KEGG" id="rno:84008"/>
<dbReference type="UCSC" id="RGD:70902">
    <property type="organism name" value="rat"/>
</dbReference>
<dbReference type="AGR" id="RGD:70902"/>
<dbReference type="CTD" id="8506"/>
<dbReference type="RGD" id="70902">
    <property type="gene designation" value="Cntnap1"/>
</dbReference>
<dbReference type="eggNOG" id="KOG3516">
    <property type="taxonomic scope" value="Eukaryota"/>
</dbReference>
<dbReference type="GeneTree" id="ENSGT00940000160825"/>
<dbReference type="HOGENOM" id="CLU_003504_1_0_1"/>
<dbReference type="InParanoid" id="P97846"/>
<dbReference type="OMA" id="RSGCHSN"/>
<dbReference type="OrthoDB" id="26719at2759"/>
<dbReference type="PhylomeDB" id="P97846"/>
<dbReference type="PRO" id="PR:P97846"/>
<dbReference type="Proteomes" id="UP000002494">
    <property type="component" value="Chromosome 10"/>
</dbReference>
<dbReference type="Bgee" id="ENSRNOG00000020277">
    <property type="expression patterns" value="Expressed in cerebellum and 20 other cell types or tissues"/>
</dbReference>
<dbReference type="GO" id="GO:0030424">
    <property type="term" value="C:axon"/>
    <property type="evidence" value="ECO:0000314"/>
    <property type="project" value="RGD"/>
</dbReference>
<dbReference type="GO" id="GO:0098978">
    <property type="term" value="C:glutamatergic synapse"/>
    <property type="evidence" value="ECO:0000266"/>
    <property type="project" value="RGD"/>
</dbReference>
<dbReference type="GO" id="GO:0016020">
    <property type="term" value="C:membrane"/>
    <property type="evidence" value="ECO:0007669"/>
    <property type="project" value="UniProtKB-SubCell"/>
</dbReference>
<dbReference type="GO" id="GO:0033010">
    <property type="term" value="C:paranodal junction"/>
    <property type="evidence" value="ECO:0007669"/>
    <property type="project" value="UniProtKB-SubCell"/>
</dbReference>
<dbReference type="GO" id="GO:0033270">
    <property type="term" value="C:paranode region of axon"/>
    <property type="evidence" value="ECO:0000314"/>
    <property type="project" value="BHF-UCL"/>
</dbReference>
<dbReference type="GO" id="GO:0048786">
    <property type="term" value="C:presynaptic active zone"/>
    <property type="evidence" value="ECO:0000314"/>
    <property type="project" value="SynGO"/>
</dbReference>
<dbReference type="GO" id="GO:0017124">
    <property type="term" value="F:SH3 domain binding"/>
    <property type="evidence" value="ECO:0000314"/>
    <property type="project" value="RGD"/>
</dbReference>
<dbReference type="GO" id="GO:0007409">
    <property type="term" value="P:axonogenesis"/>
    <property type="evidence" value="ECO:0000266"/>
    <property type="project" value="RGD"/>
</dbReference>
<dbReference type="GO" id="GO:0007155">
    <property type="term" value="P:cell adhesion"/>
    <property type="evidence" value="ECO:0007669"/>
    <property type="project" value="UniProtKB-KW"/>
</dbReference>
<dbReference type="GO" id="GO:0022010">
    <property type="term" value="P:central nervous system myelination"/>
    <property type="evidence" value="ECO:0000250"/>
    <property type="project" value="UniProtKB"/>
</dbReference>
<dbReference type="GO" id="GO:0007010">
    <property type="term" value="P:cytoskeleton organization"/>
    <property type="evidence" value="ECO:0000250"/>
    <property type="project" value="BHF-UCL"/>
</dbReference>
<dbReference type="GO" id="GO:0007005">
    <property type="term" value="P:mitochondrion organization"/>
    <property type="evidence" value="ECO:0000266"/>
    <property type="project" value="RGD"/>
</dbReference>
<dbReference type="GO" id="GO:0042552">
    <property type="term" value="P:myelination"/>
    <property type="evidence" value="ECO:0000266"/>
    <property type="project" value="RGD"/>
</dbReference>
<dbReference type="GO" id="GO:0022011">
    <property type="term" value="P:myelination in peripheral nervous system"/>
    <property type="evidence" value="ECO:0000250"/>
    <property type="project" value="UniProtKB"/>
</dbReference>
<dbReference type="GO" id="GO:0098529">
    <property type="term" value="P:neuromuscular junction development, skeletal muscle fiber"/>
    <property type="evidence" value="ECO:0000266"/>
    <property type="project" value="RGD"/>
</dbReference>
<dbReference type="GO" id="GO:0050905">
    <property type="term" value="P:neuromuscular process"/>
    <property type="evidence" value="ECO:0000266"/>
    <property type="project" value="RGD"/>
</dbReference>
<dbReference type="GO" id="GO:0050885">
    <property type="term" value="P:neuromuscular process controlling balance"/>
    <property type="evidence" value="ECO:0000250"/>
    <property type="project" value="BHF-UCL"/>
</dbReference>
<dbReference type="GO" id="GO:0050884">
    <property type="term" value="P:neuromuscular process controlling posture"/>
    <property type="evidence" value="ECO:0000250"/>
    <property type="project" value="BHF-UCL"/>
</dbReference>
<dbReference type="GO" id="GO:0031175">
    <property type="term" value="P:neuron projection development"/>
    <property type="evidence" value="ECO:0000266"/>
    <property type="project" value="RGD"/>
</dbReference>
<dbReference type="GO" id="GO:0048812">
    <property type="term" value="P:neuron projection morphogenesis"/>
    <property type="evidence" value="ECO:0000250"/>
    <property type="project" value="BHF-UCL"/>
</dbReference>
<dbReference type="GO" id="GO:0019227">
    <property type="term" value="P:neuronal action potential propagation"/>
    <property type="evidence" value="ECO:0000250"/>
    <property type="project" value="BHF-UCL"/>
</dbReference>
<dbReference type="GO" id="GO:0030913">
    <property type="term" value="P:paranodal junction assembly"/>
    <property type="evidence" value="ECO:0000250"/>
    <property type="project" value="BHF-UCL"/>
</dbReference>
<dbReference type="GO" id="GO:1990227">
    <property type="term" value="P:paranodal junction maintenance"/>
    <property type="evidence" value="ECO:0000266"/>
    <property type="project" value="RGD"/>
</dbReference>
<dbReference type="GO" id="GO:0097106">
    <property type="term" value="P:postsynaptic density organization"/>
    <property type="evidence" value="ECO:0000266"/>
    <property type="project" value="RGD"/>
</dbReference>
<dbReference type="GO" id="GO:0071205">
    <property type="term" value="P:protein localization to juxtaparanode region of axon"/>
    <property type="evidence" value="ECO:0000250"/>
    <property type="project" value="UniProtKB"/>
</dbReference>
<dbReference type="GO" id="GO:0002175">
    <property type="term" value="P:protein localization to paranode region of axon"/>
    <property type="evidence" value="ECO:0000250"/>
    <property type="project" value="BHF-UCL"/>
</dbReference>
<dbReference type="GO" id="GO:0090128">
    <property type="term" value="P:regulation of synapse maturation"/>
    <property type="evidence" value="ECO:0000266"/>
    <property type="project" value="RGD"/>
</dbReference>
<dbReference type="CDD" id="cd00054">
    <property type="entry name" value="EGF_CA"/>
    <property type="match status" value="1"/>
</dbReference>
<dbReference type="CDD" id="cd00057">
    <property type="entry name" value="FA58C"/>
    <property type="match status" value="1"/>
</dbReference>
<dbReference type="CDD" id="cd00110">
    <property type="entry name" value="LamG"/>
    <property type="match status" value="4"/>
</dbReference>
<dbReference type="FunFam" id="2.60.120.200:FF:000082">
    <property type="entry name" value="Contactin associated protein 1"/>
    <property type="match status" value="1"/>
</dbReference>
<dbReference type="FunFam" id="2.60.120.200:FF:000099">
    <property type="entry name" value="Contactin associated protein 1"/>
    <property type="match status" value="1"/>
</dbReference>
<dbReference type="FunFam" id="2.60.120.1000:FF:000005">
    <property type="entry name" value="Contactin associated protein-like 2"/>
    <property type="match status" value="1"/>
</dbReference>
<dbReference type="FunFam" id="2.60.120.260:FF:000016">
    <property type="entry name" value="Contactin-associated protein-like 4 isoform 1"/>
    <property type="match status" value="1"/>
</dbReference>
<dbReference type="FunFam" id="2.60.120.200:FF:000026">
    <property type="entry name" value="contactin-associated protein-like 4 isoform X1"/>
    <property type="match status" value="1"/>
</dbReference>
<dbReference type="FunFam" id="2.10.25.10:FF:000015">
    <property type="entry name" value="neurexin-1 isoform X1"/>
    <property type="match status" value="2"/>
</dbReference>
<dbReference type="Gene3D" id="2.60.120.1000">
    <property type="match status" value="1"/>
</dbReference>
<dbReference type="Gene3D" id="2.60.120.200">
    <property type="match status" value="4"/>
</dbReference>
<dbReference type="Gene3D" id="2.60.120.260">
    <property type="entry name" value="Galactose-binding domain-like"/>
    <property type="match status" value="1"/>
</dbReference>
<dbReference type="Gene3D" id="2.10.25.10">
    <property type="entry name" value="Laminin"/>
    <property type="match status" value="1"/>
</dbReference>
<dbReference type="InterPro" id="IPR013320">
    <property type="entry name" value="ConA-like_dom_sf"/>
</dbReference>
<dbReference type="InterPro" id="IPR000742">
    <property type="entry name" value="EGF-like_dom"/>
</dbReference>
<dbReference type="InterPro" id="IPR000421">
    <property type="entry name" value="FA58C"/>
</dbReference>
<dbReference type="InterPro" id="IPR036056">
    <property type="entry name" value="Fibrinogen-like_C"/>
</dbReference>
<dbReference type="InterPro" id="IPR002181">
    <property type="entry name" value="Fibrinogen_a/b/g_C_dom"/>
</dbReference>
<dbReference type="InterPro" id="IPR008979">
    <property type="entry name" value="Galactose-bd-like_sf"/>
</dbReference>
<dbReference type="InterPro" id="IPR001791">
    <property type="entry name" value="Laminin_G"/>
</dbReference>
<dbReference type="InterPro" id="IPR003585">
    <property type="entry name" value="Neurexin-like"/>
</dbReference>
<dbReference type="InterPro" id="IPR050372">
    <property type="entry name" value="Neurexin-related_CASP"/>
</dbReference>
<dbReference type="PANTHER" id="PTHR15036:SF43">
    <property type="entry name" value="CONTACTIN-ASSOCIATED PROTEIN 1"/>
    <property type="match status" value="1"/>
</dbReference>
<dbReference type="PANTHER" id="PTHR15036">
    <property type="entry name" value="PIKACHURIN-LIKE PROTEIN"/>
    <property type="match status" value="1"/>
</dbReference>
<dbReference type="Pfam" id="PF00754">
    <property type="entry name" value="F5_F8_type_C"/>
    <property type="match status" value="1"/>
</dbReference>
<dbReference type="Pfam" id="PF02210">
    <property type="entry name" value="Laminin_G_2"/>
    <property type="match status" value="4"/>
</dbReference>
<dbReference type="SMART" id="SM00294">
    <property type="entry name" value="4.1m"/>
    <property type="match status" value="1"/>
</dbReference>
<dbReference type="SMART" id="SM00231">
    <property type="entry name" value="FA58C"/>
    <property type="match status" value="1"/>
</dbReference>
<dbReference type="SMART" id="SM00282">
    <property type="entry name" value="LamG"/>
    <property type="match status" value="4"/>
</dbReference>
<dbReference type="SUPFAM" id="SSF49899">
    <property type="entry name" value="Concanavalin A-like lectins/glucanases"/>
    <property type="match status" value="4"/>
</dbReference>
<dbReference type="SUPFAM" id="SSF57196">
    <property type="entry name" value="EGF/Laminin"/>
    <property type="match status" value="1"/>
</dbReference>
<dbReference type="SUPFAM" id="SSF56496">
    <property type="entry name" value="Fibrinogen C-terminal domain-like"/>
    <property type="match status" value="1"/>
</dbReference>
<dbReference type="SUPFAM" id="SSF49785">
    <property type="entry name" value="Galactose-binding domain-like"/>
    <property type="match status" value="1"/>
</dbReference>
<dbReference type="PROSITE" id="PS50026">
    <property type="entry name" value="EGF_3"/>
    <property type="match status" value="2"/>
</dbReference>
<dbReference type="PROSITE" id="PS01285">
    <property type="entry name" value="FA58C_1"/>
    <property type="match status" value="1"/>
</dbReference>
<dbReference type="PROSITE" id="PS01286">
    <property type="entry name" value="FA58C_2"/>
    <property type="match status" value="1"/>
</dbReference>
<dbReference type="PROSITE" id="PS50022">
    <property type="entry name" value="FA58C_3"/>
    <property type="match status" value="1"/>
</dbReference>
<dbReference type="PROSITE" id="PS51406">
    <property type="entry name" value="FIBRINOGEN_C_2"/>
    <property type="match status" value="1"/>
</dbReference>
<dbReference type="PROSITE" id="PS50025">
    <property type="entry name" value="LAM_G_DOMAIN"/>
    <property type="match status" value="4"/>
</dbReference>
<feature type="signal peptide" evidence="3">
    <location>
        <begin position="1"/>
        <end position="20"/>
    </location>
</feature>
<feature type="chain" id="PRO_0000019505" description="Contactin-associated protein 1">
    <location>
        <begin position="21"/>
        <end position="1381"/>
    </location>
</feature>
<feature type="topological domain" description="Extracellular" evidence="3">
    <location>
        <begin position="21"/>
        <end position="1284"/>
    </location>
</feature>
<feature type="transmembrane region" description="Helical" evidence="3">
    <location>
        <begin position="1285"/>
        <end position="1305"/>
    </location>
</feature>
<feature type="topological domain" description="Cytoplasmic" evidence="3">
    <location>
        <begin position="1306"/>
        <end position="1381"/>
    </location>
</feature>
<feature type="domain" description="F5/8 type C" evidence="5">
    <location>
        <begin position="26"/>
        <end position="169"/>
    </location>
</feature>
<feature type="domain" description="Laminin G-like 1" evidence="6">
    <location>
        <begin position="204"/>
        <end position="356"/>
    </location>
</feature>
<feature type="domain" description="Laminin G-like 2" evidence="6">
    <location>
        <begin position="390"/>
        <end position="539"/>
    </location>
</feature>
<feature type="domain" description="EGF-like 1" evidence="4">
    <location>
        <begin position="544"/>
        <end position="576"/>
    </location>
</feature>
<feature type="domain" description="Fibrinogen C-terminal" evidence="7">
    <location>
        <begin position="577"/>
        <end position="796"/>
    </location>
</feature>
<feature type="domain" description="Laminin G-like 3" evidence="6">
    <location>
        <begin position="814"/>
        <end position="958"/>
    </location>
</feature>
<feature type="domain" description="EGF-like 2" evidence="4">
    <location>
        <begin position="962"/>
        <end position="996"/>
    </location>
</feature>
<feature type="domain" description="Laminin G-like 4" evidence="6">
    <location>
        <begin position="1089"/>
        <end position="1251"/>
    </location>
</feature>
<feature type="region of interest" description="Disordered" evidence="8">
    <location>
        <begin position="1317"/>
        <end position="1381"/>
    </location>
</feature>
<feature type="short sequence motif" description="SH3-binding" evidence="3">
    <location>
        <begin position="1329"/>
        <end position="1366"/>
    </location>
</feature>
<feature type="compositionally biased region" description="Basic and acidic residues" evidence="8">
    <location>
        <begin position="1319"/>
        <end position="1329"/>
    </location>
</feature>
<feature type="compositionally biased region" description="Pro residues" evidence="8">
    <location>
        <begin position="1334"/>
        <end position="1363"/>
    </location>
</feature>
<feature type="modified residue" description="Phosphoserine" evidence="2">
    <location>
        <position position="1380"/>
    </location>
</feature>
<feature type="glycosylation site" description="N-linked (GlcNAc...) asparagine" evidence="3">
    <location>
        <position position="121"/>
    </location>
</feature>
<feature type="glycosylation site" description="N-linked (GlcNAc...) asparagine" evidence="3">
    <location>
        <position position="129"/>
    </location>
</feature>
<feature type="glycosylation site" description="N-linked (GlcNAc...) asparagine" evidence="13">
    <location>
        <position position="277"/>
    </location>
</feature>
<feature type="glycosylation site" description="N-linked (GlcNAc...) asparagine" evidence="3">
    <location>
        <position position="421"/>
    </location>
</feature>
<feature type="glycosylation site" description="N-linked (GlcNAc...) asparagine" evidence="13">
    <location>
        <position position="500"/>
    </location>
</feature>
<feature type="glycosylation site" description="N-linked (GlcNAc...) asparagine" evidence="3">
    <location>
        <position position="519"/>
    </location>
</feature>
<feature type="glycosylation site" description="N-linked (GlcNAc...) asparagine" evidence="13">
    <location>
        <position position="598"/>
    </location>
</feature>
<feature type="glycosylation site" description="N-linked (GlcNAc...) asparagine" evidence="3">
    <location>
        <position position="654"/>
    </location>
</feature>
<feature type="glycosylation site" description="N-linked (GlcNAc...) asparagine" evidence="3">
    <location>
        <position position="665"/>
    </location>
</feature>
<feature type="glycosylation site" description="N-linked (GlcNAc...) asparagine" evidence="3">
    <location>
        <position position="764"/>
    </location>
</feature>
<feature type="glycosylation site" description="N-linked (GlcNAc...) asparagine" evidence="3">
    <location>
        <position position="805"/>
    </location>
</feature>
<feature type="glycosylation site" description="N-linked (GlcNAc...) asparagine" evidence="3">
    <location>
        <position position="844"/>
    </location>
</feature>
<feature type="glycosylation site" description="N-linked (GlcNAc...) asparagine" evidence="3">
    <location>
        <position position="861"/>
    </location>
</feature>
<feature type="glycosylation site" description="N-linked (GlcNAc...) asparagine" evidence="3">
    <location>
        <position position="949"/>
    </location>
</feature>
<feature type="glycosylation site" description="N-linked (GlcNAc...) asparagine" evidence="3">
    <location>
        <position position="957"/>
    </location>
</feature>
<feature type="glycosylation site" description="N-linked (GlcNAc...) asparagine" evidence="3">
    <location>
        <position position="1079"/>
    </location>
</feature>
<feature type="glycosylation site" description="N-linked (GlcNAc...) asparagine" evidence="3">
    <location>
        <position position="1148"/>
    </location>
</feature>
<feature type="disulfide bond" evidence="1">
    <location>
        <begin position="26"/>
        <end position="169"/>
    </location>
</feature>
<feature type="disulfide bond" evidence="1">
    <location>
        <begin position="324"/>
        <end position="356"/>
    </location>
</feature>
<feature type="disulfide bond" evidence="1">
    <location>
        <begin position="507"/>
        <end position="539"/>
    </location>
</feature>
<feature type="disulfide bond" evidence="1">
    <location>
        <begin position="545"/>
        <end position="556"/>
    </location>
</feature>
<feature type="disulfide bond" evidence="1">
    <location>
        <begin position="550"/>
        <end position="565"/>
    </location>
</feature>
<feature type="disulfide bond" evidence="1">
    <location>
        <begin position="567"/>
        <end position="577"/>
    </location>
</feature>
<feature type="disulfide bond" evidence="1">
    <location>
        <begin position="931"/>
        <end position="958"/>
    </location>
</feature>
<feature type="disulfide bond" evidence="1">
    <location>
        <begin position="962"/>
        <end position="975"/>
    </location>
</feature>
<feature type="disulfide bond" evidence="1">
    <location>
        <begin position="969"/>
        <end position="984"/>
    </location>
</feature>
<feature type="disulfide bond" evidence="1">
    <location>
        <begin position="986"/>
        <end position="996"/>
    </location>
</feature>
<feature type="disulfide bond" evidence="1">
    <location>
        <begin position="1210"/>
        <end position="1251"/>
    </location>
</feature>